<proteinExistence type="inferred from homology"/>
<gene>
    <name evidence="1" type="primary">rpmH</name>
    <name type="ordered locus">TGRD_046</name>
</gene>
<reference key="1">
    <citation type="journal article" date="2008" name="Proc. Natl. Acad. Sci. U.S.A.">
        <title>Complete genome of the uncultured termite group 1 bacteria in a single host protist cell.</title>
        <authorList>
            <person name="Hongoh Y."/>
            <person name="Sharma V.K."/>
            <person name="Prakash T."/>
            <person name="Noda S."/>
            <person name="Taylor T.D."/>
            <person name="Kudo T."/>
            <person name="Sakaki Y."/>
            <person name="Toyoda A."/>
            <person name="Hattori M."/>
            <person name="Ohkuma M."/>
        </authorList>
    </citation>
    <scope>NUCLEOTIDE SEQUENCE [LARGE SCALE GENOMIC DNA]</scope>
</reference>
<evidence type="ECO:0000255" key="1">
    <source>
        <dbReference type="HAMAP-Rule" id="MF_00391"/>
    </source>
</evidence>
<evidence type="ECO:0000256" key="2">
    <source>
        <dbReference type="SAM" id="MobiDB-lite"/>
    </source>
</evidence>
<evidence type="ECO:0000305" key="3"/>
<name>RL34_ENDTX</name>
<protein>
    <recommendedName>
        <fullName evidence="1">Large ribosomal subunit protein bL34</fullName>
    </recommendedName>
    <alternativeName>
        <fullName evidence="3">50S ribosomal protein L34</fullName>
    </alternativeName>
</protein>
<keyword id="KW-0687">Ribonucleoprotein</keyword>
<keyword id="KW-0689">Ribosomal protein</keyword>
<dbReference type="EMBL" id="AP009510">
    <property type="protein sequence ID" value="BAG13529.1"/>
    <property type="molecule type" value="Genomic_DNA"/>
</dbReference>
<dbReference type="RefSeq" id="WP_015423058.1">
    <property type="nucleotide sequence ID" value="NC_020419.1"/>
</dbReference>
<dbReference type="SMR" id="B1GZ47"/>
<dbReference type="STRING" id="471821.TGRD_046"/>
<dbReference type="KEGG" id="eti:RSTT_040"/>
<dbReference type="KEGG" id="rsd:TGRD_046"/>
<dbReference type="PATRIC" id="fig|471821.5.peg.82"/>
<dbReference type="HOGENOM" id="CLU_129938_2_0_0"/>
<dbReference type="OrthoDB" id="9804164at2"/>
<dbReference type="Proteomes" id="UP000001691">
    <property type="component" value="Chromosome"/>
</dbReference>
<dbReference type="GO" id="GO:1990904">
    <property type="term" value="C:ribonucleoprotein complex"/>
    <property type="evidence" value="ECO:0007669"/>
    <property type="project" value="UniProtKB-KW"/>
</dbReference>
<dbReference type="GO" id="GO:0005840">
    <property type="term" value="C:ribosome"/>
    <property type="evidence" value="ECO:0007669"/>
    <property type="project" value="UniProtKB-KW"/>
</dbReference>
<dbReference type="GO" id="GO:0003735">
    <property type="term" value="F:structural constituent of ribosome"/>
    <property type="evidence" value="ECO:0007669"/>
    <property type="project" value="InterPro"/>
</dbReference>
<dbReference type="GO" id="GO:0006412">
    <property type="term" value="P:translation"/>
    <property type="evidence" value="ECO:0007669"/>
    <property type="project" value="UniProtKB-UniRule"/>
</dbReference>
<dbReference type="FunFam" id="1.10.287.3980:FF:000001">
    <property type="entry name" value="Mitochondrial ribosomal protein L34"/>
    <property type="match status" value="1"/>
</dbReference>
<dbReference type="Gene3D" id="1.10.287.3980">
    <property type="match status" value="1"/>
</dbReference>
<dbReference type="HAMAP" id="MF_00391">
    <property type="entry name" value="Ribosomal_bL34"/>
    <property type="match status" value="1"/>
</dbReference>
<dbReference type="InterPro" id="IPR000271">
    <property type="entry name" value="Ribosomal_bL34"/>
</dbReference>
<dbReference type="InterPro" id="IPR020939">
    <property type="entry name" value="Ribosomal_bL34_CS"/>
</dbReference>
<dbReference type="NCBIfam" id="TIGR01030">
    <property type="entry name" value="rpmH_bact"/>
    <property type="match status" value="1"/>
</dbReference>
<dbReference type="PANTHER" id="PTHR14503:SF4">
    <property type="entry name" value="LARGE RIBOSOMAL SUBUNIT PROTEIN BL34M"/>
    <property type="match status" value="1"/>
</dbReference>
<dbReference type="PANTHER" id="PTHR14503">
    <property type="entry name" value="MITOCHONDRIAL RIBOSOMAL PROTEIN 34 FAMILY MEMBER"/>
    <property type="match status" value="1"/>
</dbReference>
<dbReference type="Pfam" id="PF00468">
    <property type="entry name" value="Ribosomal_L34"/>
    <property type="match status" value="1"/>
</dbReference>
<dbReference type="PROSITE" id="PS00784">
    <property type="entry name" value="RIBOSOMAL_L34"/>
    <property type="match status" value="1"/>
</dbReference>
<comment type="similarity">
    <text evidence="1">Belongs to the bacterial ribosomal protein bL34 family.</text>
</comment>
<accession>B1GZ47</accession>
<feature type="chain" id="PRO_1000196136" description="Large ribosomal subunit protein bL34">
    <location>
        <begin position="1"/>
        <end position="44"/>
    </location>
</feature>
<feature type="region of interest" description="Disordered" evidence="2">
    <location>
        <begin position="21"/>
        <end position="44"/>
    </location>
</feature>
<feature type="compositionally biased region" description="Basic residues" evidence="2">
    <location>
        <begin position="31"/>
        <end position="44"/>
    </location>
</feature>
<organism>
    <name type="scientific">Endomicrobium trichonymphae</name>
    <dbReference type="NCBI Taxonomy" id="1408204"/>
    <lineage>
        <taxon>Bacteria</taxon>
        <taxon>Pseudomonadati</taxon>
        <taxon>Elusimicrobiota</taxon>
        <taxon>Endomicrobiia</taxon>
        <taxon>Endomicrobiales</taxon>
        <taxon>Endomicrobiaceae</taxon>
        <taxon>Candidatus Endomicrobiellum</taxon>
    </lineage>
</organism>
<sequence length="44" mass="5202">MKRTFQPNRARRKKKIGFRARMDTSGGRRILSARRRKGRKTISA</sequence>